<accession>Q8FPG6</accession>
<comment type="function">
    <text evidence="1">Iron-binding repressor of the dipheteria toxin gene expression. May serve as a global regulator of gene expression. Represses ripA under iron excess (By similarity).</text>
</comment>
<comment type="subunit">
    <text evidence="1">Homodimer.</text>
</comment>
<comment type="subcellular location">
    <subcellularLocation>
        <location evidence="1">Cytoplasm</location>
    </subcellularLocation>
</comment>
<comment type="similarity">
    <text evidence="3">Belongs to the DtxR/MntR family.</text>
</comment>
<comment type="sequence caution" evidence="3">
    <conflict type="erroneous initiation">
        <sequence resource="EMBL-CDS" id="BAC18622"/>
    </conflict>
</comment>
<gene>
    <name type="primary">dtxR</name>
    <name type="ordered locus">CE1812</name>
</gene>
<organism>
    <name type="scientific">Corynebacterium efficiens (strain DSM 44549 / YS-314 / AJ 12310 / JCM 11189 / NBRC 100395)</name>
    <dbReference type="NCBI Taxonomy" id="196164"/>
    <lineage>
        <taxon>Bacteria</taxon>
        <taxon>Bacillati</taxon>
        <taxon>Actinomycetota</taxon>
        <taxon>Actinomycetes</taxon>
        <taxon>Mycobacteriales</taxon>
        <taxon>Corynebacteriaceae</taxon>
        <taxon>Corynebacterium</taxon>
    </lineage>
</organism>
<sequence>MKDLVDTTEMYLRTIYELEEEGIVPLRARIAERLEQSGPTVSQTVARMERDGLVHVSPDRSLEMTPEGRALAIAVMRKHRLAERLLTDIIGLDIHKVHDEACRWEHVMSDEVERRLVEVLDDVTRSPFGNPIPGLADIGLDQDREPDSGIRAIDLPHGESLRVRIVQLNEILQVDQEQFSILSSAGIRIGTEVDIINEQGRVVITHNGMMVELMDDLAHAVRVEKVDGLN</sequence>
<protein>
    <recommendedName>
        <fullName>Diphtheria toxin repressor</fullName>
    </recommendedName>
    <alternativeName>
        <fullName>Iron-dependent diphtheria tox regulatory element</fullName>
    </alternativeName>
    <alternativeName>
        <fullName>Tox regulatory factor</fullName>
    </alternativeName>
</protein>
<feature type="chain" id="PRO_0000223183" description="Diphtheria toxin repressor">
    <location>
        <begin position="1"/>
        <end position="230"/>
    </location>
</feature>
<feature type="domain" description="HTH dtxR-type" evidence="2">
    <location>
        <begin position="4"/>
        <end position="65"/>
    </location>
</feature>
<dbReference type="EMBL" id="BA000035">
    <property type="protein sequence ID" value="BAC18622.1"/>
    <property type="status" value="ALT_INIT"/>
    <property type="molecule type" value="Genomic_DNA"/>
</dbReference>
<dbReference type="RefSeq" id="WP_006767811.1">
    <property type="nucleotide sequence ID" value="NC_004369.1"/>
</dbReference>
<dbReference type="SMR" id="Q8FPG6"/>
<dbReference type="STRING" id="196164.gene:10742240"/>
<dbReference type="KEGG" id="cef:CE1812"/>
<dbReference type="eggNOG" id="COG1321">
    <property type="taxonomic scope" value="Bacteria"/>
</dbReference>
<dbReference type="HOGENOM" id="CLU_069532_0_0_11"/>
<dbReference type="OrthoDB" id="3208141at2"/>
<dbReference type="Proteomes" id="UP000001409">
    <property type="component" value="Chromosome"/>
</dbReference>
<dbReference type="GO" id="GO:0005737">
    <property type="term" value="C:cytoplasm"/>
    <property type="evidence" value="ECO:0007669"/>
    <property type="project" value="UniProtKB-SubCell"/>
</dbReference>
<dbReference type="GO" id="GO:0003677">
    <property type="term" value="F:DNA binding"/>
    <property type="evidence" value="ECO:0007669"/>
    <property type="project" value="UniProtKB-KW"/>
</dbReference>
<dbReference type="GO" id="GO:0003700">
    <property type="term" value="F:DNA-binding transcription factor activity"/>
    <property type="evidence" value="ECO:0007669"/>
    <property type="project" value="InterPro"/>
</dbReference>
<dbReference type="GO" id="GO:0046983">
    <property type="term" value="F:protein dimerization activity"/>
    <property type="evidence" value="ECO:0007669"/>
    <property type="project" value="InterPro"/>
</dbReference>
<dbReference type="GO" id="GO:0046914">
    <property type="term" value="F:transition metal ion binding"/>
    <property type="evidence" value="ECO:0007669"/>
    <property type="project" value="InterPro"/>
</dbReference>
<dbReference type="GO" id="GO:0045892">
    <property type="term" value="P:negative regulation of DNA-templated transcription"/>
    <property type="evidence" value="ECO:0007669"/>
    <property type="project" value="TreeGrafter"/>
</dbReference>
<dbReference type="FunFam" id="1.10.60.10:FF:000001">
    <property type="entry name" value="Iron dependent repressor"/>
    <property type="match status" value="1"/>
</dbReference>
<dbReference type="FunFam" id="1.10.10.10:FF:000067">
    <property type="entry name" value="Iron-dependent repressor IdeR"/>
    <property type="match status" value="1"/>
</dbReference>
<dbReference type="Gene3D" id="2.30.30.90">
    <property type="match status" value="1"/>
</dbReference>
<dbReference type="Gene3D" id="1.10.60.10">
    <property type="entry name" value="Iron dependent repressor, metal binding and dimerisation domain"/>
    <property type="match status" value="1"/>
</dbReference>
<dbReference type="Gene3D" id="1.10.10.10">
    <property type="entry name" value="Winged helix-like DNA-binding domain superfamily/Winged helix DNA-binding domain"/>
    <property type="match status" value="1"/>
</dbReference>
<dbReference type="InterPro" id="IPR040767">
    <property type="entry name" value="DtxR/IdeR_SH3"/>
</dbReference>
<dbReference type="InterPro" id="IPR050536">
    <property type="entry name" value="DtxR_MntR_Metal-Reg"/>
</dbReference>
<dbReference type="InterPro" id="IPR007167">
    <property type="entry name" value="Fe-transptr_FeoA-like"/>
</dbReference>
<dbReference type="InterPro" id="IPR001367">
    <property type="entry name" value="Fe_dep_repressor"/>
</dbReference>
<dbReference type="InterPro" id="IPR036421">
    <property type="entry name" value="Fe_dep_repressor_sf"/>
</dbReference>
<dbReference type="InterPro" id="IPR038157">
    <property type="entry name" value="FeoA_core_dom"/>
</dbReference>
<dbReference type="InterPro" id="IPR022687">
    <property type="entry name" value="HTH_DTXR"/>
</dbReference>
<dbReference type="InterPro" id="IPR022689">
    <property type="entry name" value="Iron_dep_repressor"/>
</dbReference>
<dbReference type="InterPro" id="IPR008988">
    <property type="entry name" value="Transcriptional_repressor_C"/>
</dbReference>
<dbReference type="InterPro" id="IPR036388">
    <property type="entry name" value="WH-like_DNA-bd_sf"/>
</dbReference>
<dbReference type="InterPro" id="IPR036390">
    <property type="entry name" value="WH_DNA-bd_sf"/>
</dbReference>
<dbReference type="PANTHER" id="PTHR33238">
    <property type="entry name" value="IRON (METAL) DEPENDENT REPRESSOR, DTXR FAMILY"/>
    <property type="match status" value="1"/>
</dbReference>
<dbReference type="PANTHER" id="PTHR33238:SF10">
    <property type="entry name" value="IRON-DEPENDENT REPRESSOR IDER"/>
    <property type="match status" value="1"/>
</dbReference>
<dbReference type="Pfam" id="PF18357">
    <property type="entry name" value="DtxR"/>
    <property type="match status" value="1"/>
</dbReference>
<dbReference type="Pfam" id="PF02742">
    <property type="entry name" value="Fe_dep_repr_C"/>
    <property type="match status" value="1"/>
</dbReference>
<dbReference type="Pfam" id="PF01325">
    <property type="entry name" value="Fe_dep_repress"/>
    <property type="match status" value="1"/>
</dbReference>
<dbReference type="SMART" id="SM00899">
    <property type="entry name" value="FeoA"/>
    <property type="match status" value="1"/>
</dbReference>
<dbReference type="SMART" id="SM00529">
    <property type="entry name" value="HTH_DTXR"/>
    <property type="match status" value="1"/>
</dbReference>
<dbReference type="SUPFAM" id="SSF50037">
    <property type="entry name" value="C-terminal domain of transcriptional repressors"/>
    <property type="match status" value="1"/>
</dbReference>
<dbReference type="SUPFAM" id="SSF47979">
    <property type="entry name" value="Iron-dependent repressor protein, dimerization domain"/>
    <property type="match status" value="1"/>
</dbReference>
<dbReference type="SUPFAM" id="SSF46785">
    <property type="entry name" value="Winged helix' DNA-binding domain"/>
    <property type="match status" value="1"/>
</dbReference>
<dbReference type="PROSITE" id="PS50944">
    <property type="entry name" value="HTH_DTXR"/>
    <property type="match status" value="1"/>
</dbReference>
<reference key="1">
    <citation type="journal article" date="2003" name="Genome Res.">
        <title>Comparative complete genome sequence analysis of the amino acid replacements responsible for the thermostability of Corynebacterium efficiens.</title>
        <authorList>
            <person name="Nishio Y."/>
            <person name="Nakamura Y."/>
            <person name="Kawarabayasi Y."/>
            <person name="Usuda Y."/>
            <person name="Kimura E."/>
            <person name="Sugimoto S."/>
            <person name="Matsui K."/>
            <person name="Yamagishi A."/>
            <person name="Kikuchi H."/>
            <person name="Ikeo K."/>
            <person name="Gojobori T."/>
        </authorList>
    </citation>
    <scope>NUCLEOTIDE SEQUENCE [LARGE SCALE GENOMIC DNA]</scope>
    <source>
        <strain>DSM 44549 / YS-314 / AJ 12310 / JCM 11189 / NBRC 100395</strain>
    </source>
</reference>
<proteinExistence type="inferred from homology"/>
<keyword id="KW-0963">Cytoplasm</keyword>
<keyword id="KW-0238">DNA-binding</keyword>
<keyword id="KW-0408">Iron</keyword>
<keyword id="KW-1185">Reference proteome</keyword>
<keyword id="KW-0678">Repressor</keyword>
<keyword id="KW-0804">Transcription</keyword>
<keyword id="KW-0805">Transcription regulation</keyword>
<name>DTXR_COREF</name>
<evidence type="ECO:0000250" key="1"/>
<evidence type="ECO:0000255" key="2">
    <source>
        <dbReference type="PROSITE-ProRule" id="PRU00296"/>
    </source>
</evidence>
<evidence type="ECO:0000305" key="3"/>